<proteinExistence type="inferred from homology"/>
<accession>Q1QYF4</accession>
<evidence type="ECO:0000255" key="1">
    <source>
        <dbReference type="HAMAP-Rule" id="MF_01017"/>
    </source>
</evidence>
<organism>
    <name type="scientific">Chromohalobacter salexigens (strain ATCC BAA-138 / DSM 3043 / CIP 106854 / NCIMB 13768 / 1H11)</name>
    <dbReference type="NCBI Taxonomy" id="290398"/>
    <lineage>
        <taxon>Bacteria</taxon>
        <taxon>Pseudomonadati</taxon>
        <taxon>Pseudomonadota</taxon>
        <taxon>Gammaproteobacteria</taxon>
        <taxon>Oceanospirillales</taxon>
        <taxon>Halomonadaceae</taxon>
        <taxon>Chromohalobacter</taxon>
    </lineage>
</organism>
<sequence>MSKVLVLYYSSYGHVETLANAVAEGVRGVAGTQVDLYRVAELVPDEVAAKSGYKEDTTAAVLDDPSVLAEYDAIVVGTPTRFGNMASQMRNFWDKTGGLWAQGKLIGKLGGAFTSTASQHGGQETTLTSIHTTLLHHGMAVVGVPYSCPALTELDEVSGGTPYGATTIAGGDGSRQPSENELTIARFQGQHIAEMAAKLAG</sequence>
<keyword id="KW-0285">Flavoprotein</keyword>
<keyword id="KW-0288">FMN</keyword>
<keyword id="KW-0520">NAD</keyword>
<keyword id="KW-0521">NADP</keyword>
<keyword id="KW-0547">Nucleotide-binding</keyword>
<keyword id="KW-0560">Oxidoreductase</keyword>
<keyword id="KW-1185">Reference proteome</keyword>
<gene>
    <name type="ordered locus">Csal_1148</name>
</gene>
<reference key="1">
    <citation type="journal article" date="2011" name="Stand. Genomic Sci.">
        <title>Complete genome sequence of the halophilic and highly halotolerant Chromohalobacter salexigens type strain (1H11(T)).</title>
        <authorList>
            <person name="Copeland A."/>
            <person name="O'Connor K."/>
            <person name="Lucas S."/>
            <person name="Lapidus A."/>
            <person name="Berry K.W."/>
            <person name="Detter J.C."/>
            <person name="Del Rio T.G."/>
            <person name="Hammon N."/>
            <person name="Dalin E."/>
            <person name="Tice H."/>
            <person name="Pitluck S."/>
            <person name="Bruce D."/>
            <person name="Goodwin L."/>
            <person name="Han C."/>
            <person name="Tapia R."/>
            <person name="Saunders E."/>
            <person name="Schmutz J."/>
            <person name="Brettin T."/>
            <person name="Larimer F."/>
            <person name="Land M."/>
            <person name="Hauser L."/>
            <person name="Vargas C."/>
            <person name="Nieto J.J."/>
            <person name="Kyrpides N.C."/>
            <person name="Ivanova N."/>
            <person name="Goker M."/>
            <person name="Klenk H.P."/>
            <person name="Csonka L.N."/>
            <person name="Woyke T."/>
        </authorList>
    </citation>
    <scope>NUCLEOTIDE SEQUENCE [LARGE SCALE GENOMIC DNA]</scope>
    <source>
        <strain>ATCC BAA-138 / DSM 3043 / CIP 106854 / NCIMB 13768 / 1H11</strain>
    </source>
</reference>
<dbReference type="EC" id="1.6.5.2" evidence="1"/>
<dbReference type="EMBL" id="CP000285">
    <property type="protein sequence ID" value="ABE58504.1"/>
    <property type="molecule type" value="Genomic_DNA"/>
</dbReference>
<dbReference type="RefSeq" id="WP_011506450.1">
    <property type="nucleotide sequence ID" value="NC_007963.1"/>
</dbReference>
<dbReference type="SMR" id="Q1QYF4"/>
<dbReference type="STRING" id="290398.Csal_1148"/>
<dbReference type="GeneID" id="95333895"/>
<dbReference type="KEGG" id="csa:Csal_1148"/>
<dbReference type="eggNOG" id="COG0655">
    <property type="taxonomic scope" value="Bacteria"/>
</dbReference>
<dbReference type="HOGENOM" id="CLU_051402_0_2_6"/>
<dbReference type="OrthoDB" id="9801479at2"/>
<dbReference type="Proteomes" id="UP000000239">
    <property type="component" value="Chromosome"/>
</dbReference>
<dbReference type="GO" id="GO:0016020">
    <property type="term" value="C:membrane"/>
    <property type="evidence" value="ECO:0007669"/>
    <property type="project" value="TreeGrafter"/>
</dbReference>
<dbReference type="GO" id="GO:0050660">
    <property type="term" value="F:flavin adenine dinucleotide binding"/>
    <property type="evidence" value="ECO:0007669"/>
    <property type="project" value="UniProtKB-UniRule"/>
</dbReference>
<dbReference type="GO" id="GO:0010181">
    <property type="term" value="F:FMN binding"/>
    <property type="evidence" value="ECO:0007669"/>
    <property type="project" value="InterPro"/>
</dbReference>
<dbReference type="GO" id="GO:0051287">
    <property type="term" value="F:NAD binding"/>
    <property type="evidence" value="ECO:0007669"/>
    <property type="project" value="UniProtKB-UniRule"/>
</dbReference>
<dbReference type="GO" id="GO:0050136">
    <property type="term" value="F:NADH:ubiquinone reductase (non-electrogenic) activity"/>
    <property type="evidence" value="ECO:0007669"/>
    <property type="project" value="RHEA"/>
</dbReference>
<dbReference type="GO" id="GO:0050661">
    <property type="term" value="F:NADP binding"/>
    <property type="evidence" value="ECO:0007669"/>
    <property type="project" value="UniProtKB-UniRule"/>
</dbReference>
<dbReference type="GO" id="GO:0008753">
    <property type="term" value="F:NADPH dehydrogenase (quinone) activity"/>
    <property type="evidence" value="ECO:0007669"/>
    <property type="project" value="RHEA"/>
</dbReference>
<dbReference type="FunFam" id="3.40.50.360:FF:000001">
    <property type="entry name" value="NAD(P)H dehydrogenase (Quinone) FQR1-like"/>
    <property type="match status" value="1"/>
</dbReference>
<dbReference type="Gene3D" id="3.40.50.360">
    <property type="match status" value="1"/>
</dbReference>
<dbReference type="HAMAP" id="MF_01017">
    <property type="entry name" value="NQOR"/>
    <property type="match status" value="1"/>
</dbReference>
<dbReference type="InterPro" id="IPR008254">
    <property type="entry name" value="Flavodoxin/NO_synth"/>
</dbReference>
<dbReference type="InterPro" id="IPR029039">
    <property type="entry name" value="Flavoprotein-like_sf"/>
</dbReference>
<dbReference type="InterPro" id="IPR010089">
    <property type="entry name" value="Flavoprotein_WrbA-like"/>
</dbReference>
<dbReference type="InterPro" id="IPR005025">
    <property type="entry name" value="FMN_Rdtase-like_dom"/>
</dbReference>
<dbReference type="InterPro" id="IPR037513">
    <property type="entry name" value="NQO"/>
</dbReference>
<dbReference type="NCBIfam" id="TIGR01755">
    <property type="entry name" value="flav_wrbA"/>
    <property type="match status" value="1"/>
</dbReference>
<dbReference type="NCBIfam" id="NF002999">
    <property type="entry name" value="PRK03767.1"/>
    <property type="match status" value="1"/>
</dbReference>
<dbReference type="PANTHER" id="PTHR30546">
    <property type="entry name" value="FLAVODOXIN-RELATED PROTEIN WRBA-RELATED"/>
    <property type="match status" value="1"/>
</dbReference>
<dbReference type="PANTHER" id="PTHR30546:SF23">
    <property type="entry name" value="FLAVOPROTEIN-LIKE PROTEIN YCP4-RELATED"/>
    <property type="match status" value="1"/>
</dbReference>
<dbReference type="Pfam" id="PF03358">
    <property type="entry name" value="FMN_red"/>
    <property type="match status" value="1"/>
</dbReference>
<dbReference type="SUPFAM" id="SSF52218">
    <property type="entry name" value="Flavoproteins"/>
    <property type="match status" value="1"/>
</dbReference>
<dbReference type="PROSITE" id="PS50902">
    <property type="entry name" value="FLAVODOXIN_LIKE"/>
    <property type="match status" value="1"/>
</dbReference>
<feature type="chain" id="PRO_0000291012" description="NAD(P)H dehydrogenase (quinone)">
    <location>
        <begin position="1"/>
        <end position="201"/>
    </location>
</feature>
<feature type="domain" description="Flavodoxin-like" evidence="1">
    <location>
        <begin position="4"/>
        <end position="192"/>
    </location>
</feature>
<feature type="binding site" evidence="1">
    <location>
        <begin position="10"/>
        <end position="15"/>
    </location>
    <ligand>
        <name>FMN</name>
        <dbReference type="ChEBI" id="CHEBI:58210"/>
    </ligand>
</feature>
<feature type="binding site" evidence="1">
    <location>
        <position position="12"/>
    </location>
    <ligand>
        <name>NAD(+)</name>
        <dbReference type="ChEBI" id="CHEBI:57540"/>
    </ligand>
</feature>
<feature type="binding site" evidence="1">
    <location>
        <begin position="80"/>
        <end position="82"/>
    </location>
    <ligand>
        <name>FMN</name>
        <dbReference type="ChEBI" id="CHEBI:58210"/>
    </ligand>
</feature>
<feature type="binding site" evidence="1">
    <location>
        <position position="100"/>
    </location>
    <ligand>
        <name>substrate</name>
    </ligand>
</feature>
<feature type="binding site" evidence="1">
    <location>
        <begin position="115"/>
        <end position="121"/>
    </location>
    <ligand>
        <name>FMN</name>
        <dbReference type="ChEBI" id="CHEBI:58210"/>
    </ligand>
</feature>
<feature type="binding site" evidence="1">
    <location>
        <position position="136"/>
    </location>
    <ligand>
        <name>FMN</name>
        <dbReference type="ChEBI" id="CHEBI:58210"/>
    </ligand>
</feature>
<comment type="catalytic activity">
    <reaction evidence="1">
        <text>a quinone + NADH + H(+) = a quinol + NAD(+)</text>
        <dbReference type="Rhea" id="RHEA:46160"/>
        <dbReference type="ChEBI" id="CHEBI:15378"/>
        <dbReference type="ChEBI" id="CHEBI:24646"/>
        <dbReference type="ChEBI" id="CHEBI:57540"/>
        <dbReference type="ChEBI" id="CHEBI:57945"/>
        <dbReference type="ChEBI" id="CHEBI:132124"/>
        <dbReference type="EC" id="1.6.5.2"/>
    </reaction>
</comment>
<comment type="catalytic activity">
    <reaction evidence="1">
        <text>a quinone + NADPH + H(+) = a quinol + NADP(+)</text>
        <dbReference type="Rhea" id="RHEA:46164"/>
        <dbReference type="ChEBI" id="CHEBI:15378"/>
        <dbReference type="ChEBI" id="CHEBI:24646"/>
        <dbReference type="ChEBI" id="CHEBI:57783"/>
        <dbReference type="ChEBI" id="CHEBI:58349"/>
        <dbReference type="ChEBI" id="CHEBI:132124"/>
        <dbReference type="EC" id="1.6.5.2"/>
    </reaction>
</comment>
<comment type="cofactor">
    <cofactor evidence="1">
        <name>FMN</name>
        <dbReference type="ChEBI" id="CHEBI:58210"/>
    </cofactor>
    <text evidence="1">Binds 1 FMN per monomer.</text>
</comment>
<comment type="similarity">
    <text evidence="1">Belongs to the WrbA family.</text>
</comment>
<name>NQOR_CHRSD</name>
<protein>
    <recommendedName>
        <fullName evidence="1">NAD(P)H dehydrogenase (quinone)</fullName>
        <ecNumber evidence="1">1.6.5.2</ecNumber>
    </recommendedName>
    <alternativeName>
        <fullName>Flavoprotein WrbA</fullName>
    </alternativeName>
    <alternativeName>
        <fullName evidence="1">NAD(P)H:quinone oxidoreductase</fullName>
        <shortName evidence="1">NQO</shortName>
    </alternativeName>
</protein>